<keyword id="KW-0119">Carbohydrate metabolism</keyword>
<keyword id="KW-0146">Chitin degradation</keyword>
<keyword id="KW-0147">Chitin-binding</keyword>
<keyword id="KW-1015">Disulfide bond</keyword>
<keyword id="KW-0326">Glycosidase</keyword>
<keyword id="KW-0378">Hydrolase</keyword>
<keyword id="KW-0611">Plant defense</keyword>
<keyword id="KW-0624">Polysaccharide degradation</keyword>
<keyword id="KW-0732">Signal</keyword>
<dbReference type="EC" id="3.2.1.14"/>
<dbReference type="EMBL" id="U01661">
    <property type="protein sequence ID" value="AAA57278.1"/>
    <property type="molecule type" value="Genomic_DNA"/>
</dbReference>
<dbReference type="EMBL" id="U01660">
    <property type="protein sequence ID" value="AAA57277.1"/>
    <property type="molecule type" value="mRNA"/>
</dbReference>
<dbReference type="EMBL" id="M25336">
    <property type="protein sequence ID" value="AAA96701.1"/>
    <property type="molecule type" value="mRNA"/>
</dbReference>
<dbReference type="PIR" id="B33985">
    <property type="entry name" value="B33985"/>
</dbReference>
<dbReference type="SMR" id="P16579"/>
<dbReference type="CAZy" id="CBM18">
    <property type="family name" value="Carbohydrate-Binding Module Family 18"/>
</dbReference>
<dbReference type="CAZy" id="GH19">
    <property type="family name" value="Glycoside Hydrolase Family 19"/>
</dbReference>
<dbReference type="eggNOG" id="KOG4742">
    <property type="taxonomic scope" value="Eukaryota"/>
</dbReference>
<dbReference type="ExpressionAtlas" id="P16579">
    <property type="expression patterns" value="baseline and differential"/>
</dbReference>
<dbReference type="GO" id="GO:0008061">
    <property type="term" value="F:chitin binding"/>
    <property type="evidence" value="ECO:0007669"/>
    <property type="project" value="UniProtKB-KW"/>
</dbReference>
<dbReference type="GO" id="GO:0008843">
    <property type="term" value="F:endochitinase activity"/>
    <property type="evidence" value="ECO:0007669"/>
    <property type="project" value="UniProtKB-EC"/>
</dbReference>
<dbReference type="GO" id="GO:0016998">
    <property type="term" value="P:cell wall macromolecule catabolic process"/>
    <property type="evidence" value="ECO:0007669"/>
    <property type="project" value="InterPro"/>
</dbReference>
<dbReference type="GO" id="GO:0006032">
    <property type="term" value="P:chitin catabolic process"/>
    <property type="evidence" value="ECO:0007669"/>
    <property type="project" value="UniProtKB-KW"/>
</dbReference>
<dbReference type="GO" id="GO:0050832">
    <property type="term" value="P:defense response to fungus"/>
    <property type="evidence" value="ECO:0007669"/>
    <property type="project" value="UniProtKB-ARBA"/>
</dbReference>
<dbReference type="GO" id="GO:0000272">
    <property type="term" value="P:polysaccharide catabolic process"/>
    <property type="evidence" value="ECO:0007669"/>
    <property type="project" value="UniProtKB-KW"/>
</dbReference>
<dbReference type="CDD" id="cd00325">
    <property type="entry name" value="chitinase_GH19"/>
    <property type="match status" value="1"/>
</dbReference>
<dbReference type="CDD" id="cd06921">
    <property type="entry name" value="ChtBD1_GH19_hevein"/>
    <property type="match status" value="1"/>
</dbReference>
<dbReference type="FunFam" id="1.10.530.10:FF:000067">
    <property type="entry name" value="Acidic endochitinase WIN6.2B"/>
    <property type="match status" value="1"/>
</dbReference>
<dbReference type="FunFam" id="3.30.60.10:FF:000001">
    <property type="entry name" value="Basic endochitinase"/>
    <property type="match status" value="1"/>
</dbReference>
<dbReference type="FunFam" id="3.30.20.10:FF:000001">
    <property type="entry name" value="Endochitinase (Chitinase)"/>
    <property type="match status" value="1"/>
</dbReference>
<dbReference type="Gene3D" id="1.10.530.10">
    <property type="match status" value="1"/>
</dbReference>
<dbReference type="Gene3D" id="3.30.20.10">
    <property type="entry name" value="Endochitinase, domain 2"/>
    <property type="match status" value="1"/>
</dbReference>
<dbReference type="Gene3D" id="3.30.60.10">
    <property type="entry name" value="Endochitinase-like"/>
    <property type="match status" value="1"/>
</dbReference>
<dbReference type="InterPro" id="IPR001002">
    <property type="entry name" value="Chitin-bd_1"/>
</dbReference>
<dbReference type="InterPro" id="IPR018371">
    <property type="entry name" value="Chitin-binding_1_CS"/>
</dbReference>
<dbReference type="InterPro" id="IPR036861">
    <property type="entry name" value="Endochitinase-like_sf"/>
</dbReference>
<dbReference type="InterPro" id="IPR016283">
    <property type="entry name" value="Glyco_hydro_19"/>
</dbReference>
<dbReference type="InterPro" id="IPR000726">
    <property type="entry name" value="Glyco_hydro_19_cat"/>
</dbReference>
<dbReference type="InterPro" id="IPR023346">
    <property type="entry name" value="Lysozyme-like_dom_sf"/>
</dbReference>
<dbReference type="PANTHER" id="PTHR22595:SF79">
    <property type="entry name" value="CHITINASE 12"/>
    <property type="match status" value="1"/>
</dbReference>
<dbReference type="PANTHER" id="PTHR22595">
    <property type="entry name" value="CHITINASE-RELATED"/>
    <property type="match status" value="1"/>
</dbReference>
<dbReference type="Pfam" id="PF00187">
    <property type="entry name" value="Chitin_bind_1"/>
    <property type="match status" value="1"/>
</dbReference>
<dbReference type="Pfam" id="PF00182">
    <property type="entry name" value="Glyco_hydro_19"/>
    <property type="match status" value="1"/>
</dbReference>
<dbReference type="PIRSF" id="PIRSF001060">
    <property type="entry name" value="Endochitinase"/>
    <property type="match status" value="1"/>
</dbReference>
<dbReference type="PRINTS" id="PR00451">
    <property type="entry name" value="CHITINBINDNG"/>
</dbReference>
<dbReference type="SMART" id="SM00270">
    <property type="entry name" value="ChtBD1"/>
    <property type="match status" value="1"/>
</dbReference>
<dbReference type="SUPFAM" id="SSF53955">
    <property type="entry name" value="Lysozyme-like"/>
    <property type="match status" value="1"/>
</dbReference>
<dbReference type="SUPFAM" id="SSF57016">
    <property type="entry name" value="Plant lectins/antimicrobial peptides"/>
    <property type="match status" value="1"/>
</dbReference>
<dbReference type="PROSITE" id="PS00026">
    <property type="entry name" value="CHIT_BIND_I_1"/>
    <property type="match status" value="1"/>
</dbReference>
<dbReference type="PROSITE" id="PS50941">
    <property type="entry name" value="CHIT_BIND_I_2"/>
    <property type="match status" value="1"/>
</dbReference>
<dbReference type="PROSITE" id="PS00773">
    <property type="entry name" value="CHITINASE_19_1"/>
    <property type="match status" value="1"/>
</dbReference>
<dbReference type="PROSITE" id="PS00774">
    <property type="entry name" value="CHITINASE_19_2"/>
    <property type="match status" value="1"/>
</dbReference>
<sequence>MSVWALFAFFSLFLSLSVRGSAEQCGRQAGDALCPGGLCCSSYGWCGTTVDYCGIGCQSQCDGGGGGDGGDDGCDGGDDGGGDGDDGYLSDIIPKSKFDALLKFRNDARCPAAGFYTYNAFISAAKEFPDFGNTGDDLMRKREIAAFLGQTSHETTGGWPDAPCGPYAWGYCYLKEINCQPYCDPSSNYQCVAGKQYCGRGPIQLSWNYNYGLCGDDLKLPLLQEPELVETDPVISFKTAIWFWMKPQSPKPSCHAVITGNWTPSAADLEAGRVPGYGVITNIINGGIECGQGGPNAANEDRIGFYKKYCDSLGTTYGSNLDCYQQRPFGYGLSGLKDTM</sequence>
<proteinExistence type="evidence at transcript level"/>
<name>CHI6_POPTR</name>
<accession>P16579</accession>
<evidence type="ECO:0000250" key="1"/>
<evidence type="ECO:0000250" key="2">
    <source>
        <dbReference type="UniProtKB" id="P29022"/>
    </source>
</evidence>
<evidence type="ECO:0000255" key="3">
    <source>
        <dbReference type="PROSITE-ProRule" id="PRU00261"/>
    </source>
</evidence>
<evidence type="ECO:0000305" key="4"/>
<reference key="1">
    <citation type="journal article" date="1994" name="Plant Mol. Biol.">
        <title>Wound-induced and developmental activation of a poplar tree chitinase gene promoter in transgenic tobacco.</title>
        <authorList>
            <person name="Clarke H.R."/>
            <person name="Davis J.M."/>
            <person name="Wilbert S.M."/>
            <person name="Bradshaw H.D. Jr."/>
            <person name="Gordon M.P."/>
        </authorList>
    </citation>
    <scope>NUCLEOTIDE SEQUENCE [GENOMIC DNA / MRNA]</scope>
    <source>
        <strain>H11-11</strain>
        <tissue>Leaf</tissue>
    </source>
</reference>
<reference key="2">
    <citation type="journal article" date="1989" name="Proc. Natl. Acad. Sci. U.S.A.">
        <title>Systemic accumulation of specific mRNAs in response to wounding in poplar trees.</title>
        <authorList>
            <person name="Parsons T.J."/>
            <person name="Bradshaw H.D. Jr."/>
            <person name="Gordon M.P."/>
        </authorList>
    </citation>
    <scope>NUCLEOTIDE SEQUENCE [MRNA] OF 127-340</scope>
</reference>
<organism>
    <name type="scientific">Populus trichocarpa</name>
    <name type="common">Western balsam poplar</name>
    <name type="synonym">Populus balsamifera subsp. trichocarpa</name>
    <dbReference type="NCBI Taxonomy" id="3694"/>
    <lineage>
        <taxon>Eukaryota</taxon>
        <taxon>Viridiplantae</taxon>
        <taxon>Streptophyta</taxon>
        <taxon>Embryophyta</taxon>
        <taxon>Tracheophyta</taxon>
        <taxon>Spermatophyta</taxon>
        <taxon>Magnoliopsida</taxon>
        <taxon>eudicotyledons</taxon>
        <taxon>Gunneridae</taxon>
        <taxon>Pentapetalae</taxon>
        <taxon>rosids</taxon>
        <taxon>fabids</taxon>
        <taxon>Malpighiales</taxon>
        <taxon>Salicaceae</taxon>
        <taxon>Saliceae</taxon>
        <taxon>Populus</taxon>
    </lineage>
</organism>
<feature type="signal peptide" evidence="1">
    <location>
        <begin position="1"/>
        <end position="22"/>
    </location>
</feature>
<feature type="chain" id="PRO_0000005316" description="Acidic endochitinase WIN6">
    <location>
        <begin position="23"/>
        <end position="340"/>
    </location>
</feature>
<feature type="domain" description="Chitin-binding type-1" evidence="3">
    <location>
        <begin position="23"/>
        <end position="63"/>
    </location>
</feature>
<feature type="region of interest" description="Spacer">
    <location>
        <begin position="64"/>
        <end position="85"/>
    </location>
</feature>
<feature type="region of interest" description="Chitinase">
    <location>
        <begin position="86"/>
        <end position="340"/>
    </location>
</feature>
<feature type="active site" description="Proton donor" evidence="2">
    <location>
        <position position="154"/>
    </location>
</feature>
<feature type="disulfide bond" evidence="3">
    <location>
        <begin position="25"/>
        <end position="40"/>
    </location>
</feature>
<feature type="disulfide bond" evidence="3">
    <location>
        <begin position="34"/>
        <end position="46"/>
    </location>
</feature>
<feature type="disulfide bond" evidence="3">
    <location>
        <begin position="39"/>
        <end position="53"/>
    </location>
</feature>
<feature type="disulfide bond" evidence="3">
    <location>
        <begin position="57"/>
        <end position="61"/>
    </location>
</feature>
<feature type="disulfide bond" evidence="3">
    <location>
        <begin position="110"/>
        <end position="172"/>
    </location>
</feature>
<feature type="disulfide bond" evidence="3">
    <location>
        <begin position="183"/>
        <end position="191"/>
    </location>
</feature>
<feature type="disulfide bond" evidence="3">
    <location>
        <begin position="290"/>
        <end position="323"/>
    </location>
</feature>
<protein>
    <recommendedName>
        <fullName>Acidic endochitinase WIN6</fullName>
        <ecNumber>3.2.1.14</ecNumber>
    </recommendedName>
</protein>
<gene>
    <name type="primary">WIN6</name>
</gene>
<comment type="function">
    <text>Defense against chitin-containing fungal pathogens.</text>
</comment>
<comment type="catalytic activity">
    <reaction>
        <text>Random endo-hydrolysis of N-acetyl-beta-D-glucosaminide (1-&gt;4)-beta-linkages in chitin and chitodextrins.</text>
        <dbReference type="EC" id="3.2.1.14"/>
    </reaction>
</comment>
<comment type="induction">
    <text>By wounding.</text>
</comment>
<comment type="similarity">
    <text evidence="4">Belongs to the glycosyl hydrolase 19 family. Chitinase class I subfamily.</text>
</comment>